<proteinExistence type="inferred from homology"/>
<keyword id="KW-1043">Host membrane</keyword>
<keyword id="KW-0472">Membrane</keyword>
<keyword id="KW-1185">Reference proteome</keyword>
<keyword id="KW-0812">Transmembrane</keyword>
<keyword id="KW-1133">Transmembrane helix</keyword>
<feature type="chain" id="PRO_0000405747" description="Gene 58 protein">
    <location>
        <begin position="1"/>
        <end position="351"/>
    </location>
</feature>
<feature type="transmembrane region" description="Helical" evidence="1">
    <location>
        <begin position="14"/>
        <end position="34"/>
    </location>
</feature>
<feature type="transmembrane region" description="Helical" evidence="1">
    <location>
        <begin position="43"/>
        <end position="63"/>
    </location>
</feature>
<feature type="transmembrane region" description="Helical" evidence="1">
    <location>
        <begin position="70"/>
        <end position="90"/>
    </location>
</feature>
<feature type="transmembrane region" description="Helical" evidence="1">
    <location>
        <begin position="97"/>
        <end position="117"/>
    </location>
</feature>
<feature type="transmembrane region" description="Helical" evidence="1">
    <location>
        <begin position="133"/>
        <end position="153"/>
    </location>
</feature>
<feature type="transmembrane region" description="Helical" evidence="1">
    <location>
        <begin position="155"/>
        <end position="175"/>
    </location>
</feature>
<feature type="transmembrane region" description="Helical" evidence="1">
    <location>
        <begin position="214"/>
        <end position="234"/>
    </location>
</feature>
<feature type="transmembrane region" description="Helical" evidence="1">
    <location>
        <begin position="240"/>
        <end position="260"/>
    </location>
</feature>
<feature type="transmembrane region" description="Helical" evidence="1">
    <location>
        <begin position="268"/>
        <end position="288"/>
    </location>
</feature>
<feature type="transmembrane region" description="Helical" evidence="1">
    <location>
        <begin position="293"/>
        <end position="313"/>
    </location>
</feature>
<feature type="transmembrane region" description="Helical" evidence="1">
    <location>
        <begin position="328"/>
        <end position="348"/>
    </location>
</feature>
<comment type="subcellular location">
    <subcellularLocation>
        <location evidence="2">Host membrane</location>
        <topology evidence="2">Multi-pass membrane protein</topology>
    </subcellularLocation>
</comment>
<comment type="similarity">
    <text evidence="2">Belongs to the herpesviridae BMRF2 family.</text>
</comment>
<gene>
    <name type="primary">58</name>
</gene>
<protein>
    <recommendedName>
        <fullName>Gene 58 protein</fullName>
    </recommendedName>
</protein>
<reference key="1">
    <citation type="journal article" date="1997" name="J. Virol.">
        <title>Primary structure of the alcelaphine herpesvirus 1 genome.</title>
        <authorList>
            <person name="Ensser A."/>
            <person name="Pflanz R."/>
            <person name="Fleckenstein B."/>
        </authorList>
    </citation>
    <scope>NUCLEOTIDE SEQUENCE [LARGE SCALE GENOMIC DNA]</scope>
</reference>
<dbReference type="EMBL" id="AF005370">
    <property type="protein sequence ID" value="AAC58105.1"/>
    <property type="molecule type" value="Genomic_DNA"/>
</dbReference>
<dbReference type="PIR" id="T03153">
    <property type="entry name" value="T03153"/>
</dbReference>
<dbReference type="RefSeq" id="NP_065557.1">
    <property type="nucleotide sequence ID" value="NC_002531.1"/>
</dbReference>
<dbReference type="KEGG" id="vg:911782"/>
<dbReference type="Proteomes" id="UP000000941">
    <property type="component" value="Segment"/>
</dbReference>
<dbReference type="GO" id="GO:0033644">
    <property type="term" value="C:host cell membrane"/>
    <property type="evidence" value="ECO:0007669"/>
    <property type="project" value="UniProtKB-SubCell"/>
</dbReference>
<dbReference type="GO" id="GO:0016020">
    <property type="term" value="C:membrane"/>
    <property type="evidence" value="ECO:0007669"/>
    <property type="project" value="UniProtKB-KW"/>
</dbReference>
<dbReference type="InterPro" id="IPR006727">
    <property type="entry name" value="Herpes_BMRF2"/>
</dbReference>
<dbReference type="Pfam" id="PF04633">
    <property type="entry name" value="Herpes_BMRF2"/>
    <property type="match status" value="1"/>
</dbReference>
<organismHost>
    <name type="scientific">Connochaetes taurinus</name>
    <name type="common">Blue wildebeest</name>
    <dbReference type="NCBI Taxonomy" id="9927"/>
</organismHost>
<sequence length="351" mass="40351">MTKSVDYQLIAATFSTGLLASSSIVWSYIFATVFSFSSMLTWQSVLYVWSLPIVQLAAIFCAVRVNFSRLGLLLLLNCGIAFLSFISWSLNWSISVLVPGLFVINFLSLMIWLIVCFDVVYLCPEIYHKYFELGFLASLTIHYCFNQFEIYLTNVMFAPFFICMLFGYIGFSHVWRHDMYIFGKMRCKPIYYTKRAKYIAFSAWQIMDVALFELICLWFLLLAMAAGCIALVMFSEVFLGVSTYLYLFMVGNFCCGSLIIYRSYVMTAVYSVVSLTAFFLILMGGYLFTKAQLSMLAAVMFFCYFHANGCLLYRIKKKLHRNITTPRFILNVCMLLNALLEITVLLAQKLT</sequence>
<evidence type="ECO:0000255" key="1"/>
<evidence type="ECO:0000305" key="2"/>
<name>VG58_ALHV1</name>
<organism>
    <name type="scientific">Alcelaphine herpesvirus 1 (strain C500)</name>
    <name type="common">AlHV-1</name>
    <name type="synonym">Malignant catarrhal fever virus</name>
    <dbReference type="NCBI Taxonomy" id="654901"/>
    <lineage>
        <taxon>Viruses</taxon>
        <taxon>Duplodnaviria</taxon>
        <taxon>Heunggongvirae</taxon>
        <taxon>Peploviricota</taxon>
        <taxon>Herviviricetes</taxon>
        <taxon>Herpesvirales</taxon>
        <taxon>Orthoherpesviridae</taxon>
        <taxon>Gammaherpesvirinae</taxon>
        <taxon>Macavirus</taxon>
        <taxon>Macavirus alcelaphinegamma1</taxon>
    </lineage>
</organism>
<accession>O36408</accession>